<feature type="chain" id="PRO_0000403683" description="4-hydroxyphenylacetate decarboxylase activating enzyme">
    <location>
        <begin position="1"/>
        <end position="316"/>
    </location>
</feature>
<feature type="domain" description="Radical SAM core" evidence="7">
    <location>
        <begin position="20"/>
        <end position="307"/>
    </location>
</feature>
<feature type="domain" description="4Fe-4S ferredoxin-type" evidence="6">
    <location>
        <begin position="84"/>
        <end position="115"/>
    </location>
</feature>
<feature type="binding site" evidence="1">
    <location>
        <position position="34"/>
    </location>
    <ligand>
        <name>[4Fe-4S] cluster</name>
        <dbReference type="ChEBI" id="CHEBI:49883"/>
        <label>1</label>
        <note>4Fe-4S-S-AdoMet</note>
    </ligand>
</feature>
<feature type="binding site" evidence="1">
    <location>
        <position position="38"/>
    </location>
    <ligand>
        <name>[4Fe-4S] cluster</name>
        <dbReference type="ChEBI" id="CHEBI:49883"/>
        <label>1</label>
        <note>4Fe-4S-S-AdoMet</note>
    </ligand>
</feature>
<feature type="binding site" evidence="1">
    <location>
        <begin position="40"/>
        <end position="42"/>
    </location>
    <ligand>
        <name>S-adenosyl-L-methionine</name>
        <dbReference type="ChEBI" id="CHEBI:59789"/>
    </ligand>
</feature>
<feature type="binding site" evidence="1">
    <location>
        <position position="41"/>
    </location>
    <ligand>
        <name>[4Fe-4S] cluster</name>
        <dbReference type="ChEBI" id="CHEBI:49883"/>
        <label>1</label>
        <note>4Fe-4S-S-AdoMet</note>
    </ligand>
</feature>
<feature type="binding site" evidence="2">
    <location>
        <position position="60"/>
    </location>
    <ligand>
        <name>[4Fe-4S] cluster</name>
        <dbReference type="ChEBI" id="CHEBI:49883"/>
        <label>2</label>
    </ligand>
</feature>
<feature type="binding site" evidence="2">
    <location>
        <position position="66"/>
    </location>
    <ligand>
        <name>[4Fe-4S] cluster</name>
        <dbReference type="ChEBI" id="CHEBI:49883"/>
        <label>2</label>
    </ligand>
</feature>
<feature type="binding site" evidence="2">
    <location>
        <position position="69"/>
    </location>
    <ligand>
        <name>[4Fe-4S] cluster</name>
        <dbReference type="ChEBI" id="CHEBI:49883"/>
        <label>2</label>
    </ligand>
</feature>
<feature type="binding site" evidence="2">
    <location>
        <position position="105"/>
    </location>
    <ligand>
        <name>[4Fe-4S] cluster</name>
        <dbReference type="ChEBI" id="CHEBI:49883"/>
        <label>2</label>
    </ligand>
</feature>
<feature type="binding site" evidence="1">
    <location>
        <position position="144"/>
    </location>
    <ligand>
        <name>S-adenosyl-L-methionine</name>
        <dbReference type="ChEBI" id="CHEBI:59789"/>
    </ligand>
</feature>
<feature type="binding site" evidence="1">
    <location>
        <begin position="193"/>
        <end position="195"/>
    </location>
    <ligand>
        <name>S-adenosyl-L-methionine</name>
        <dbReference type="ChEBI" id="CHEBI:59789"/>
    </ligand>
</feature>
<feature type="binding site" evidence="1">
    <location>
        <position position="267"/>
    </location>
    <ligand>
        <name>S-adenosyl-L-methionine</name>
        <dbReference type="ChEBI" id="CHEBI:59789"/>
    </ligand>
</feature>
<accession>Q18CP3</accession>
<protein>
    <recommendedName>
        <fullName evidence="4">4-hydroxyphenylacetate decarboxylase activating enzyme</fullName>
        <shortName evidence="4">Hpd-AE</shortName>
        <ecNumber evidence="4">1.97.1.-</ecNumber>
    </recommendedName>
</protein>
<proteinExistence type="inferred from homology"/>
<comment type="function">
    <text evidence="3 4">Catalyzes activation of 4-hydroxyphenylacetate decarboxylase under anaerobic conditions by generation of an organic free radical on a glycine residue, via a homolytic cleavage of S-adenosyl-L-methionine (SAM).</text>
</comment>
<comment type="catalytic activity">
    <reaction evidence="4">
        <text>glycyl-[protein] + reduced [flavodoxin] + S-adenosyl-L-methionine = glycin-2-yl radical-[protein] + semiquinone [flavodoxin] + 5'-deoxyadenosine + L-methionine + H(+)</text>
        <dbReference type="Rhea" id="RHEA:61976"/>
        <dbReference type="Rhea" id="RHEA-COMP:10622"/>
        <dbReference type="Rhea" id="RHEA-COMP:14480"/>
        <dbReference type="Rhea" id="RHEA-COMP:15993"/>
        <dbReference type="Rhea" id="RHEA-COMP:15994"/>
        <dbReference type="ChEBI" id="CHEBI:15378"/>
        <dbReference type="ChEBI" id="CHEBI:17319"/>
        <dbReference type="ChEBI" id="CHEBI:29947"/>
        <dbReference type="ChEBI" id="CHEBI:32722"/>
        <dbReference type="ChEBI" id="CHEBI:57618"/>
        <dbReference type="ChEBI" id="CHEBI:57844"/>
        <dbReference type="ChEBI" id="CHEBI:59789"/>
        <dbReference type="ChEBI" id="CHEBI:140311"/>
    </reaction>
</comment>
<comment type="cofactor">
    <cofactor evidence="4">
        <name>[4Fe-4S] cluster</name>
        <dbReference type="ChEBI" id="CHEBI:49883"/>
    </cofactor>
    <text evidence="4">Binds 2 [4Fe-4S] clusters. One cluster is coordinated with 3 cysteines and an exchangeable S-adenosyl-L-methionine.</text>
</comment>
<comment type="subunit">
    <text evidence="4">Monomer.</text>
</comment>
<comment type="similarity">
    <text evidence="5">Belongs to the organic radical-activating enzymes family.</text>
</comment>
<gene>
    <name evidence="8" type="primary">hpdA</name>
    <name type="ordered locus">CD630_01550</name>
</gene>
<organism>
    <name type="scientific">Clostridioides difficile (strain 630)</name>
    <name type="common">Peptoclostridium difficile</name>
    <dbReference type="NCBI Taxonomy" id="272563"/>
    <lineage>
        <taxon>Bacteria</taxon>
        <taxon>Bacillati</taxon>
        <taxon>Bacillota</taxon>
        <taxon>Clostridia</taxon>
        <taxon>Peptostreptococcales</taxon>
        <taxon>Peptostreptococcaceae</taxon>
        <taxon>Clostridioides</taxon>
    </lineage>
</organism>
<keyword id="KW-0004">4Fe-4S</keyword>
<keyword id="KW-0408">Iron</keyword>
<keyword id="KW-0411">Iron-sulfur</keyword>
<keyword id="KW-0479">Metal-binding</keyword>
<keyword id="KW-0560">Oxidoreductase</keyword>
<keyword id="KW-1185">Reference proteome</keyword>
<keyword id="KW-0949">S-adenosyl-L-methionine</keyword>
<evidence type="ECO:0000250" key="1">
    <source>
        <dbReference type="UniProtKB" id="P0A9N4"/>
    </source>
</evidence>
<evidence type="ECO:0000250" key="2">
    <source>
        <dbReference type="UniProtKB" id="Q30W71"/>
    </source>
</evidence>
<evidence type="ECO:0000250" key="3">
    <source>
        <dbReference type="UniProtKB" id="Q46267"/>
    </source>
</evidence>
<evidence type="ECO:0000250" key="4">
    <source>
        <dbReference type="UniProtKB" id="Q84F14"/>
    </source>
</evidence>
<evidence type="ECO:0000255" key="5"/>
<evidence type="ECO:0000255" key="6">
    <source>
        <dbReference type="PROSITE-ProRule" id="PRU00711"/>
    </source>
</evidence>
<evidence type="ECO:0000255" key="7">
    <source>
        <dbReference type="PROSITE-ProRule" id="PRU01266"/>
    </source>
</evidence>
<evidence type="ECO:0000312" key="8">
    <source>
        <dbReference type="EMBL" id="CAJ66975.1"/>
    </source>
</evidence>
<name>HPDA_CLOD6</name>
<sequence>MSSQKQLEGMIFDVQSFSVHDGPGCRTTVFLNGCPLSCKWCANPESWTVRPHMMFSELSCQYENGCTVCHGKCKNGALSFNLDNKPVIDWNICKDCESFECVNSCYYNAFKLCAKPYTVDELVQVIKRDSNNWRSNGGVTFSGGEPLLQHEFLHEVLLKCHEVNIHTAIETSACVSNEVFNKIFNDIDFAFIDIKHMDREKHKEQTGVYNDLILENISNLANSDWNGRLVLRVPVISGFNDSDENISDIISFMHKNNLVEINLLPFHRLGESKWTQLGKEYEYSDKGDVDEGHLEELQDIFLDNGIACYVGHETAF</sequence>
<reference key="1">
    <citation type="journal article" date="2006" name="Nat. Genet.">
        <title>The multidrug-resistant human pathogen Clostridium difficile has a highly mobile, mosaic genome.</title>
        <authorList>
            <person name="Sebaihia M."/>
            <person name="Wren B.W."/>
            <person name="Mullany P."/>
            <person name="Fairweather N.F."/>
            <person name="Minton N."/>
            <person name="Stabler R."/>
            <person name="Thomson N.R."/>
            <person name="Roberts A.P."/>
            <person name="Cerdeno-Tarraga A.M."/>
            <person name="Wang H."/>
            <person name="Holden M.T.G."/>
            <person name="Wright A."/>
            <person name="Churcher C."/>
            <person name="Quail M.A."/>
            <person name="Baker S."/>
            <person name="Bason N."/>
            <person name="Brooks K."/>
            <person name="Chillingworth T."/>
            <person name="Cronin A."/>
            <person name="Davis P."/>
            <person name="Dowd L."/>
            <person name="Fraser A."/>
            <person name="Feltwell T."/>
            <person name="Hance Z."/>
            <person name="Holroyd S."/>
            <person name="Jagels K."/>
            <person name="Moule S."/>
            <person name="Mungall K."/>
            <person name="Price C."/>
            <person name="Rabbinowitsch E."/>
            <person name="Sharp S."/>
            <person name="Simmonds M."/>
            <person name="Stevens K."/>
            <person name="Unwin L."/>
            <person name="Whithead S."/>
            <person name="Dupuy B."/>
            <person name="Dougan G."/>
            <person name="Barrell B."/>
            <person name="Parkhill J."/>
        </authorList>
    </citation>
    <scope>NUCLEOTIDE SEQUENCE [LARGE SCALE GENOMIC DNA]</scope>
    <source>
        <strain>630</strain>
    </source>
</reference>
<dbReference type="EC" id="1.97.1.-" evidence="4"/>
<dbReference type="EMBL" id="AM180355">
    <property type="protein sequence ID" value="CAJ66975.1"/>
    <property type="molecule type" value="Genomic_DNA"/>
</dbReference>
<dbReference type="RefSeq" id="WP_011860651.1">
    <property type="nucleotide sequence ID" value="NZ_JAUPES010000004.1"/>
</dbReference>
<dbReference type="RefSeq" id="YP_001086624.1">
    <property type="nucleotide sequence ID" value="NC_009089.1"/>
</dbReference>
<dbReference type="SMR" id="Q18CP3"/>
<dbReference type="STRING" id="272563.CD630_01550"/>
<dbReference type="DNASU" id="4914361"/>
<dbReference type="EnsemblBacteria" id="CAJ66975">
    <property type="protein sequence ID" value="CAJ66975"/>
    <property type="gene ID" value="CD630_01550"/>
</dbReference>
<dbReference type="KEGG" id="cdf:CD630_01550"/>
<dbReference type="KEGG" id="pdc:CDIF630_00274"/>
<dbReference type="PATRIC" id="fig|272563.120.peg.168"/>
<dbReference type="eggNOG" id="COG1180">
    <property type="taxonomic scope" value="Bacteria"/>
</dbReference>
<dbReference type="OrthoDB" id="9782387at2"/>
<dbReference type="PhylomeDB" id="Q18CP3"/>
<dbReference type="BioCyc" id="PDIF272563:G12WB-259-MONOMER"/>
<dbReference type="Proteomes" id="UP000001978">
    <property type="component" value="Chromosome"/>
</dbReference>
<dbReference type="GO" id="GO:0051539">
    <property type="term" value="F:4 iron, 4 sulfur cluster binding"/>
    <property type="evidence" value="ECO:0007669"/>
    <property type="project" value="UniProtKB-KW"/>
</dbReference>
<dbReference type="GO" id="GO:0046872">
    <property type="term" value="F:metal ion binding"/>
    <property type="evidence" value="ECO:0007669"/>
    <property type="project" value="UniProtKB-KW"/>
</dbReference>
<dbReference type="GO" id="GO:0016491">
    <property type="term" value="F:oxidoreductase activity"/>
    <property type="evidence" value="ECO:0007669"/>
    <property type="project" value="UniProtKB-KW"/>
</dbReference>
<dbReference type="Gene3D" id="3.20.20.70">
    <property type="entry name" value="Aldolase class I"/>
    <property type="match status" value="1"/>
</dbReference>
<dbReference type="InterPro" id="IPR034438">
    <property type="entry name" value="4-hPhe_decarboxylase_activase"/>
</dbReference>
<dbReference type="InterPro" id="IPR017896">
    <property type="entry name" value="4Fe4S_Fe-S-bd"/>
</dbReference>
<dbReference type="InterPro" id="IPR013785">
    <property type="entry name" value="Aldolase_TIM"/>
</dbReference>
<dbReference type="InterPro" id="IPR040074">
    <property type="entry name" value="BssD/PflA/YjjW"/>
</dbReference>
<dbReference type="InterPro" id="IPR034457">
    <property type="entry name" value="Organic_radical-activating"/>
</dbReference>
<dbReference type="InterPro" id="IPR012839">
    <property type="entry name" value="Organic_radical_activase"/>
</dbReference>
<dbReference type="InterPro" id="IPR001989">
    <property type="entry name" value="Radical_activat_CS"/>
</dbReference>
<dbReference type="InterPro" id="IPR007197">
    <property type="entry name" value="rSAM"/>
</dbReference>
<dbReference type="NCBIfam" id="NF033717">
    <property type="entry name" value="HPDL_rSAM_activ"/>
    <property type="match status" value="1"/>
</dbReference>
<dbReference type="NCBIfam" id="TIGR02494">
    <property type="entry name" value="PFLE_PFLC"/>
    <property type="match status" value="1"/>
</dbReference>
<dbReference type="PANTHER" id="PTHR30352:SF4">
    <property type="entry name" value="PYRUVATE FORMATE-LYASE 2-ACTIVATING ENZYME"/>
    <property type="match status" value="1"/>
</dbReference>
<dbReference type="PANTHER" id="PTHR30352">
    <property type="entry name" value="PYRUVATE FORMATE-LYASE-ACTIVATING ENZYME"/>
    <property type="match status" value="1"/>
</dbReference>
<dbReference type="Pfam" id="PF13353">
    <property type="entry name" value="Fer4_12"/>
    <property type="match status" value="1"/>
</dbReference>
<dbReference type="Pfam" id="PF04055">
    <property type="entry name" value="Radical_SAM"/>
    <property type="match status" value="1"/>
</dbReference>
<dbReference type="PIRSF" id="PIRSF000371">
    <property type="entry name" value="PFL_act_enz"/>
    <property type="match status" value="1"/>
</dbReference>
<dbReference type="SFLD" id="SFLDF00279">
    <property type="entry name" value="4-hydroxyphenylacetate_decarbo"/>
    <property type="match status" value="1"/>
</dbReference>
<dbReference type="SFLD" id="SFLDG01118">
    <property type="entry name" value="activating_enzymes__group_2"/>
    <property type="match status" value="1"/>
</dbReference>
<dbReference type="SFLD" id="SFLDG01066">
    <property type="entry name" value="organic_radical-activating_enz"/>
    <property type="match status" value="1"/>
</dbReference>
<dbReference type="SUPFAM" id="SSF54862">
    <property type="entry name" value="4Fe-4S ferredoxins"/>
    <property type="match status" value="1"/>
</dbReference>
<dbReference type="SUPFAM" id="SSF102114">
    <property type="entry name" value="Radical SAM enzymes"/>
    <property type="match status" value="1"/>
</dbReference>
<dbReference type="PROSITE" id="PS51379">
    <property type="entry name" value="4FE4S_FER_2"/>
    <property type="match status" value="1"/>
</dbReference>
<dbReference type="PROSITE" id="PS01087">
    <property type="entry name" value="RADICAL_ACTIVATING"/>
    <property type="match status" value="1"/>
</dbReference>
<dbReference type="PROSITE" id="PS51918">
    <property type="entry name" value="RADICAL_SAM"/>
    <property type="match status" value="1"/>
</dbReference>